<reference key="1">
    <citation type="journal article" date="1996" name="Nucleic Acids Res.">
        <title>Complete sequence analysis of the genome of the bacterium Mycoplasma pneumoniae.</title>
        <authorList>
            <person name="Himmelreich R."/>
            <person name="Hilbert H."/>
            <person name="Plagens H."/>
            <person name="Pirkl E."/>
            <person name="Li B.-C."/>
            <person name="Herrmann R."/>
        </authorList>
    </citation>
    <scope>NUCLEOTIDE SEQUENCE [LARGE SCALE GENOMIC DNA]</scope>
    <source>
        <strain>ATCC 29342 / M129 / Subtype 1</strain>
    </source>
</reference>
<sequence length="143" mass="16313">MKLLKNNIYINVYLKNKQEIFEFVFKKFKEDGAVLDSFLPAIVERDKAASVAIGNYLFLPHPVYDEIANIQKEKMVFIGLKDVINIDGQPIKFICGLALKGEHQMDALQSLAIAFSDPEEVEKLVKDKDLTQDKVLEFLAKHN</sequence>
<evidence type="ECO:0000250" key="1">
    <source>
        <dbReference type="UniProtKB" id="P00550"/>
    </source>
</evidence>
<evidence type="ECO:0000250" key="2">
    <source>
        <dbReference type="UniProtKB" id="P0A0E0"/>
    </source>
</evidence>
<evidence type="ECO:0000255" key="3">
    <source>
        <dbReference type="PROSITE-ProRule" id="PRU00417"/>
    </source>
</evidence>
<evidence type="ECO:0000305" key="4"/>
<proteinExistence type="inferred from homology"/>
<name>PTMA_MYCPN</name>
<accession>P75145</accession>
<comment type="function">
    <text evidence="2">The phosphoenolpyruvate-dependent sugar phosphotransferase system (sugar PTS), a major carbohydrate active transport system, catalyzes the phosphorylation of incoming sugar substrates concomitantly with their translocation across the cell membrane. The enzyme II CmtAB PTS system is involved in D-mannitol transport.</text>
</comment>
<comment type="subcellular location">
    <subcellularLocation>
        <location evidence="4">Cytoplasm</location>
    </subcellularLocation>
</comment>
<comment type="domain">
    <text evidence="3">The PTS EIIA type-2 domain is phosphorylated by phospho-HPr on a histidyl residue. Then, it transfers the phosphoryl group to the PTS EIIB type-2 domain.</text>
</comment>
<feature type="chain" id="PRO_0000186635" description="Mannitol-specific phosphotransferase enzyme IIA component">
    <location>
        <begin position="1"/>
        <end position="143"/>
    </location>
</feature>
<feature type="domain" description="PTS EIIA type-2" evidence="3">
    <location>
        <begin position="1"/>
        <end position="142"/>
    </location>
</feature>
<feature type="active site" description="Tele-phosphohistidine intermediate" evidence="2 3">
    <location>
        <position position="61"/>
    </location>
</feature>
<feature type="modified residue" description="Phosphohistidine; by HPr" evidence="1 2">
    <location>
        <position position="61"/>
    </location>
</feature>
<organism>
    <name type="scientific">Mycoplasma pneumoniae (strain ATCC 29342 / M129 / Subtype 1)</name>
    <name type="common">Mycoplasmoides pneumoniae</name>
    <dbReference type="NCBI Taxonomy" id="272634"/>
    <lineage>
        <taxon>Bacteria</taxon>
        <taxon>Bacillati</taxon>
        <taxon>Mycoplasmatota</taxon>
        <taxon>Mycoplasmoidales</taxon>
        <taxon>Mycoplasmoidaceae</taxon>
        <taxon>Mycoplasmoides</taxon>
    </lineage>
</organism>
<protein>
    <recommendedName>
        <fullName evidence="2">Mannitol-specific phosphotransferase enzyme IIA component</fullName>
    </recommendedName>
    <alternativeName>
        <fullName evidence="2">EIIA</fullName>
    </alternativeName>
    <alternativeName>
        <fullName evidence="2">EIII</fullName>
    </alternativeName>
    <alternativeName>
        <fullName evidence="2">PTS system mannitol-specific EIIA component</fullName>
    </alternativeName>
</protein>
<keyword id="KW-0963">Cytoplasm</keyword>
<keyword id="KW-0418">Kinase</keyword>
<keyword id="KW-0597">Phosphoprotein</keyword>
<keyword id="KW-0598">Phosphotransferase system</keyword>
<keyword id="KW-1185">Reference proteome</keyword>
<keyword id="KW-0762">Sugar transport</keyword>
<keyword id="KW-0808">Transferase</keyword>
<keyword id="KW-0813">Transport</keyword>
<gene>
    <name type="primary">mtlF</name>
    <name type="ordered locus">MPN_653</name>
    <name type="ORF">MP189</name>
</gene>
<dbReference type="EMBL" id="U00089">
    <property type="protein sequence ID" value="AAB95837.1"/>
    <property type="molecule type" value="Genomic_DNA"/>
</dbReference>
<dbReference type="PIR" id="S73515">
    <property type="entry name" value="S73515"/>
</dbReference>
<dbReference type="RefSeq" id="NP_110342.1">
    <property type="nucleotide sequence ID" value="NC_000912.1"/>
</dbReference>
<dbReference type="RefSeq" id="WP_010875010.1">
    <property type="nucleotide sequence ID" value="NZ_OU342337.1"/>
</dbReference>
<dbReference type="SMR" id="P75145"/>
<dbReference type="IntAct" id="P75145">
    <property type="interactions" value="1"/>
</dbReference>
<dbReference type="STRING" id="272634.MPN_653"/>
<dbReference type="EnsemblBacteria" id="AAB95837">
    <property type="protein sequence ID" value="AAB95837"/>
    <property type="gene ID" value="MPN_653"/>
</dbReference>
<dbReference type="KEGG" id="mpn:MPN_653"/>
<dbReference type="PATRIC" id="fig|272634.6.peg.717"/>
<dbReference type="HOGENOM" id="CLU_072531_3_1_14"/>
<dbReference type="OrthoDB" id="1640042at2"/>
<dbReference type="BioCyc" id="MPNE272634:G1GJ3-1043-MONOMER"/>
<dbReference type="Proteomes" id="UP000000808">
    <property type="component" value="Chromosome"/>
</dbReference>
<dbReference type="GO" id="GO:0005737">
    <property type="term" value="C:cytoplasm"/>
    <property type="evidence" value="ECO:0007669"/>
    <property type="project" value="UniProtKB-SubCell"/>
</dbReference>
<dbReference type="GO" id="GO:0005886">
    <property type="term" value="C:plasma membrane"/>
    <property type="evidence" value="ECO:0007669"/>
    <property type="project" value="TreeGrafter"/>
</dbReference>
<dbReference type="GO" id="GO:0016301">
    <property type="term" value="F:kinase activity"/>
    <property type="evidence" value="ECO:0007669"/>
    <property type="project" value="UniProtKB-KW"/>
</dbReference>
<dbReference type="GO" id="GO:0090563">
    <property type="term" value="F:protein-phosphocysteine-sugar phosphotransferase activity"/>
    <property type="evidence" value="ECO:0007669"/>
    <property type="project" value="TreeGrafter"/>
</dbReference>
<dbReference type="GO" id="GO:0009401">
    <property type="term" value="P:phosphoenolpyruvate-dependent sugar phosphotransferase system"/>
    <property type="evidence" value="ECO:0007669"/>
    <property type="project" value="UniProtKB-KW"/>
</dbReference>
<dbReference type="Gene3D" id="3.40.930.10">
    <property type="entry name" value="Mannitol-specific EII, Chain A"/>
    <property type="match status" value="1"/>
</dbReference>
<dbReference type="InterPro" id="IPR016152">
    <property type="entry name" value="PTrfase/Anion_transptr"/>
</dbReference>
<dbReference type="InterPro" id="IPR002178">
    <property type="entry name" value="PTS_EIIA_type-2_dom"/>
</dbReference>
<dbReference type="InterPro" id="IPR050893">
    <property type="entry name" value="Sugar_PTS"/>
</dbReference>
<dbReference type="PANTHER" id="PTHR30181">
    <property type="entry name" value="MANNITOL PERMEASE IIC COMPONENT"/>
    <property type="match status" value="1"/>
</dbReference>
<dbReference type="PANTHER" id="PTHR30181:SF2">
    <property type="entry name" value="PTS SYSTEM MANNITOL-SPECIFIC EIICBA COMPONENT"/>
    <property type="match status" value="1"/>
</dbReference>
<dbReference type="Pfam" id="PF00359">
    <property type="entry name" value="PTS_EIIA_2"/>
    <property type="match status" value="1"/>
</dbReference>
<dbReference type="SUPFAM" id="SSF55804">
    <property type="entry name" value="Phoshotransferase/anion transport protein"/>
    <property type="match status" value="1"/>
</dbReference>
<dbReference type="PROSITE" id="PS51094">
    <property type="entry name" value="PTS_EIIA_TYPE_2"/>
    <property type="match status" value="1"/>
</dbReference>